<name>YP010_KLULA</name>
<proteinExistence type="inferred from homology"/>
<keyword id="KW-0472">Membrane</keyword>
<keyword id="KW-1185">Reference proteome</keyword>
<keyword id="KW-0812">Transmembrane</keyword>
<keyword id="KW-1133">Transmembrane helix</keyword>
<evidence type="ECO:0000255" key="1"/>
<evidence type="ECO:0000305" key="2"/>
<organism>
    <name type="scientific">Kluyveromyces lactis (strain ATCC 8585 / CBS 2359 / DSM 70799 / NBRC 1267 / NRRL Y-1140 / WM37)</name>
    <name type="common">Yeast</name>
    <name type="synonym">Candida sphaerica</name>
    <dbReference type="NCBI Taxonomy" id="284590"/>
    <lineage>
        <taxon>Eukaryota</taxon>
        <taxon>Fungi</taxon>
        <taxon>Dikarya</taxon>
        <taxon>Ascomycota</taxon>
        <taxon>Saccharomycotina</taxon>
        <taxon>Saccharomycetes</taxon>
        <taxon>Saccharomycetales</taxon>
        <taxon>Saccharomycetaceae</taxon>
        <taxon>Kluyveromyces</taxon>
    </lineage>
</organism>
<dbReference type="EMBL" id="CR382124">
    <property type="protein sequence ID" value="CAH00351.1"/>
    <property type="molecule type" value="Genomic_DNA"/>
</dbReference>
<dbReference type="RefSeq" id="XP_453255.1">
    <property type="nucleotide sequence ID" value="XM_453255.1"/>
</dbReference>
<dbReference type="SMR" id="Q6CS34"/>
<dbReference type="FunCoup" id="Q6CS34">
    <property type="interactions" value="121"/>
</dbReference>
<dbReference type="STRING" id="284590.Q6CS34"/>
<dbReference type="PaxDb" id="284590-Q6CS34"/>
<dbReference type="KEGG" id="kla:KLLA0_D04334g"/>
<dbReference type="eggNOG" id="ENOG502S6WH">
    <property type="taxonomic scope" value="Eukaryota"/>
</dbReference>
<dbReference type="HOGENOM" id="CLU_180937_0_0_1"/>
<dbReference type="InParanoid" id="Q6CS34"/>
<dbReference type="OMA" id="TYRHFAH"/>
<dbReference type="Proteomes" id="UP000000598">
    <property type="component" value="Chromosome D"/>
</dbReference>
<dbReference type="GO" id="GO:0016020">
    <property type="term" value="C:membrane"/>
    <property type="evidence" value="ECO:0007669"/>
    <property type="project" value="UniProtKB-SubCell"/>
</dbReference>
<dbReference type="InterPro" id="IPR010530">
    <property type="entry name" value="B12D"/>
</dbReference>
<dbReference type="Pfam" id="PF06522">
    <property type="entry name" value="B12D"/>
    <property type="match status" value="1"/>
</dbReference>
<protein>
    <recommendedName>
        <fullName>UPF0495 protein KLLA0D04334g</fullName>
    </recommendedName>
</protein>
<accession>Q6CS34</accession>
<reference key="1">
    <citation type="journal article" date="2004" name="Nature">
        <title>Genome evolution in yeasts.</title>
        <authorList>
            <person name="Dujon B."/>
            <person name="Sherman D."/>
            <person name="Fischer G."/>
            <person name="Durrens P."/>
            <person name="Casaregola S."/>
            <person name="Lafontaine I."/>
            <person name="de Montigny J."/>
            <person name="Marck C."/>
            <person name="Neuveglise C."/>
            <person name="Talla E."/>
            <person name="Goffard N."/>
            <person name="Frangeul L."/>
            <person name="Aigle M."/>
            <person name="Anthouard V."/>
            <person name="Babour A."/>
            <person name="Barbe V."/>
            <person name="Barnay S."/>
            <person name="Blanchin S."/>
            <person name="Beckerich J.-M."/>
            <person name="Beyne E."/>
            <person name="Bleykasten C."/>
            <person name="Boisrame A."/>
            <person name="Boyer J."/>
            <person name="Cattolico L."/>
            <person name="Confanioleri F."/>
            <person name="de Daruvar A."/>
            <person name="Despons L."/>
            <person name="Fabre E."/>
            <person name="Fairhead C."/>
            <person name="Ferry-Dumazet H."/>
            <person name="Groppi A."/>
            <person name="Hantraye F."/>
            <person name="Hennequin C."/>
            <person name="Jauniaux N."/>
            <person name="Joyet P."/>
            <person name="Kachouri R."/>
            <person name="Kerrest A."/>
            <person name="Koszul R."/>
            <person name="Lemaire M."/>
            <person name="Lesur I."/>
            <person name="Ma L."/>
            <person name="Muller H."/>
            <person name="Nicaud J.-M."/>
            <person name="Nikolski M."/>
            <person name="Oztas S."/>
            <person name="Ozier-Kalogeropoulos O."/>
            <person name="Pellenz S."/>
            <person name="Potier S."/>
            <person name="Richard G.-F."/>
            <person name="Straub M.-L."/>
            <person name="Suleau A."/>
            <person name="Swennen D."/>
            <person name="Tekaia F."/>
            <person name="Wesolowski-Louvel M."/>
            <person name="Westhof E."/>
            <person name="Wirth B."/>
            <person name="Zeniou-Meyer M."/>
            <person name="Zivanovic Y."/>
            <person name="Bolotin-Fukuhara M."/>
            <person name="Thierry A."/>
            <person name="Bouchier C."/>
            <person name="Caudron B."/>
            <person name="Scarpelli C."/>
            <person name="Gaillardin C."/>
            <person name="Weissenbach J."/>
            <person name="Wincker P."/>
            <person name="Souciet J.-L."/>
        </authorList>
    </citation>
    <scope>NUCLEOTIDE SEQUENCE [LARGE SCALE GENOMIC DNA]</scope>
    <source>
        <strain>ATCC 8585 / CBS 2359 / DSM 70799 / NBRC 1267 / NRRL Y-1140 / WM37</strain>
    </source>
</reference>
<comment type="subcellular location">
    <subcellularLocation>
        <location evidence="2">Membrane</location>
        <topology evidence="2">Single-pass membrane protein</topology>
    </subcellularLocation>
</comment>
<comment type="similarity">
    <text evidence="2">Belongs to the UPF0495 family.</text>
</comment>
<sequence length="72" mass="8073">MRPTQFVLNAAKKKSGFSVPVELTPLFLAMGVALASGTWFSYKKFFHDDSLRVSRKNPEQSALDKVLNQKAE</sequence>
<gene>
    <name type="ordered locus">KLLA0D04334g</name>
</gene>
<feature type="chain" id="PRO_0000306771" description="UPF0495 protein KLLA0D04334g">
    <location>
        <begin position="1"/>
        <end position="72"/>
    </location>
</feature>
<feature type="transmembrane region" description="Helical" evidence="1">
    <location>
        <begin position="20"/>
        <end position="42"/>
    </location>
</feature>